<feature type="chain" id="PRO_1000164022" description="Regulatory protein RecX">
    <location>
        <begin position="1"/>
        <end position="171"/>
    </location>
</feature>
<gene>
    <name evidence="1" type="primary">recX</name>
    <name type="ordered locus">MLBr00988</name>
</gene>
<dbReference type="EMBL" id="FM211192">
    <property type="protein sequence ID" value="CAR71083.1"/>
    <property type="molecule type" value="Genomic_DNA"/>
</dbReference>
<dbReference type="SMR" id="B8ZQT6"/>
<dbReference type="KEGG" id="mlb:MLBr00988"/>
<dbReference type="HOGENOM" id="CLU_066607_0_2_11"/>
<dbReference type="Proteomes" id="UP000006900">
    <property type="component" value="Chromosome"/>
</dbReference>
<dbReference type="GO" id="GO:0005737">
    <property type="term" value="C:cytoplasm"/>
    <property type="evidence" value="ECO:0007669"/>
    <property type="project" value="UniProtKB-SubCell"/>
</dbReference>
<dbReference type="GO" id="GO:0006282">
    <property type="term" value="P:regulation of DNA repair"/>
    <property type="evidence" value="ECO:0007669"/>
    <property type="project" value="UniProtKB-UniRule"/>
</dbReference>
<dbReference type="Gene3D" id="1.10.10.10">
    <property type="entry name" value="Winged helix-like DNA-binding domain superfamily/Winged helix DNA-binding domain"/>
    <property type="match status" value="2"/>
</dbReference>
<dbReference type="HAMAP" id="MF_01114">
    <property type="entry name" value="RecX"/>
    <property type="match status" value="1"/>
</dbReference>
<dbReference type="InterPro" id="IPR053926">
    <property type="entry name" value="RecX_HTH_1st"/>
</dbReference>
<dbReference type="InterPro" id="IPR053924">
    <property type="entry name" value="RecX_HTH_2nd"/>
</dbReference>
<dbReference type="InterPro" id="IPR053925">
    <property type="entry name" value="RecX_HTH_3rd"/>
</dbReference>
<dbReference type="InterPro" id="IPR003783">
    <property type="entry name" value="Regulatory_RecX"/>
</dbReference>
<dbReference type="InterPro" id="IPR036388">
    <property type="entry name" value="WH-like_DNA-bd_sf"/>
</dbReference>
<dbReference type="NCBIfam" id="NF001056">
    <property type="entry name" value="PRK00117.3-1"/>
    <property type="match status" value="1"/>
</dbReference>
<dbReference type="PANTHER" id="PTHR33602">
    <property type="entry name" value="REGULATORY PROTEIN RECX FAMILY PROTEIN"/>
    <property type="match status" value="1"/>
</dbReference>
<dbReference type="PANTHER" id="PTHR33602:SF1">
    <property type="entry name" value="REGULATORY PROTEIN RECX FAMILY PROTEIN"/>
    <property type="match status" value="1"/>
</dbReference>
<dbReference type="Pfam" id="PF21982">
    <property type="entry name" value="RecX_HTH1"/>
    <property type="match status" value="1"/>
</dbReference>
<dbReference type="Pfam" id="PF02631">
    <property type="entry name" value="RecX_HTH2"/>
    <property type="match status" value="1"/>
</dbReference>
<dbReference type="Pfam" id="PF21981">
    <property type="entry name" value="RecX_HTH3"/>
    <property type="match status" value="1"/>
</dbReference>
<name>RECX_MYCLB</name>
<sequence length="171" mass="19313">MTTSCPPPSISDREEQARILCLRLLTARSRTRAQLFGQLAKRGYADHVSERVLDRLAAVGLLDDNDFAEQWVRSRRANVGKSKRALAADLRAKGIDSEVITTVLAGIDPAVERERAEQLVRTRLRREVLSEDDARVSRRLMAMLARRGYSQTTICEVVVAELAAERERRRV</sequence>
<protein>
    <recommendedName>
        <fullName evidence="1">Regulatory protein RecX</fullName>
    </recommendedName>
</protein>
<proteinExistence type="inferred from homology"/>
<reference key="1">
    <citation type="journal article" date="2009" name="Nat. Genet.">
        <title>Comparative genomic and phylogeographic analysis of Mycobacterium leprae.</title>
        <authorList>
            <person name="Monot M."/>
            <person name="Honore N."/>
            <person name="Garnier T."/>
            <person name="Zidane N."/>
            <person name="Sherafi D."/>
            <person name="Paniz-Mondolfi A."/>
            <person name="Matsuoka M."/>
            <person name="Taylor G.M."/>
            <person name="Donoghue H.D."/>
            <person name="Bouwman A."/>
            <person name="Mays S."/>
            <person name="Watson C."/>
            <person name="Lockwood D."/>
            <person name="Khamispour A."/>
            <person name="Dowlati Y."/>
            <person name="Jianping S."/>
            <person name="Rea T.H."/>
            <person name="Vera-Cabrera L."/>
            <person name="Stefani M.M."/>
            <person name="Banu S."/>
            <person name="Macdonald M."/>
            <person name="Sapkota B.R."/>
            <person name="Spencer J.S."/>
            <person name="Thomas J."/>
            <person name="Harshman K."/>
            <person name="Singh P."/>
            <person name="Busso P."/>
            <person name="Gattiker A."/>
            <person name="Rougemont J."/>
            <person name="Brennan P.J."/>
            <person name="Cole S.T."/>
        </authorList>
    </citation>
    <scope>NUCLEOTIDE SEQUENCE [LARGE SCALE GENOMIC DNA]</scope>
    <source>
        <strain>Br4923</strain>
    </source>
</reference>
<keyword id="KW-0963">Cytoplasm</keyword>
<evidence type="ECO:0000255" key="1">
    <source>
        <dbReference type="HAMAP-Rule" id="MF_01114"/>
    </source>
</evidence>
<comment type="function">
    <text evidence="1">Modulates RecA activity.</text>
</comment>
<comment type="subcellular location">
    <subcellularLocation>
        <location evidence="1">Cytoplasm</location>
    </subcellularLocation>
</comment>
<comment type="similarity">
    <text evidence="1">Belongs to the RecX family.</text>
</comment>
<organism>
    <name type="scientific">Mycobacterium leprae (strain Br4923)</name>
    <dbReference type="NCBI Taxonomy" id="561304"/>
    <lineage>
        <taxon>Bacteria</taxon>
        <taxon>Bacillati</taxon>
        <taxon>Actinomycetota</taxon>
        <taxon>Actinomycetes</taxon>
        <taxon>Mycobacteriales</taxon>
        <taxon>Mycobacteriaceae</taxon>
        <taxon>Mycobacterium</taxon>
    </lineage>
</organism>
<accession>B8ZQT6</accession>